<feature type="chain" id="PRO_0000310095" description="Probable nicotinate-nucleotide adenylyltransferase">
    <location>
        <begin position="1"/>
        <end position="205"/>
    </location>
</feature>
<accession>A0JXJ4</accession>
<name>NADD_ARTS2</name>
<organism>
    <name type="scientific">Arthrobacter sp. (strain FB24)</name>
    <dbReference type="NCBI Taxonomy" id="290399"/>
    <lineage>
        <taxon>Bacteria</taxon>
        <taxon>Bacillati</taxon>
        <taxon>Actinomycetota</taxon>
        <taxon>Actinomycetes</taxon>
        <taxon>Micrococcales</taxon>
        <taxon>Micrococcaceae</taxon>
        <taxon>Arthrobacter</taxon>
    </lineage>
</organism>
<keyword id="KW-0067">ATP-binding</keyword>
<keyword id="KW-0520">NAD</keyword>
<keyword id="KW-0547">Nucleotide-binding</keyword>
<keyword id="KW-0548">Nucleotidyltransferase</keyword>
<keyword id="KW-0662">Pyridine nucleotide biosynthesis</keyword>
<keyword id="KW-1185">Reference proteome</keyword>
<keyword id="KW-0808">Transferase</keyword>
<dbReference type="EC" id="2.7.7.18" evidence="1"/>
<dbReference type="EMBL" id="CP000454">
    <property type="protein sequence ID" value="ABK03764.1"/>
    <property type="molecule type" value="Genomic_DNA"/>
</dbReference>
<dbReference type="SMR" id="A0JXJ4"/>
<dbReference type="STRING" id="290399.Arth_2385"/>
<dbReference type="KEGG" id="art:Arth_2385"/>
<dbReference type="eggNOG" id="COG1057">
    <property type="taxonomic scope" value="Bacteria"/>
</dbReference>
<dbReference type="HOGENOM" id="CLU_069765_1_1_11"/>
<dbReference type="OrthoDB" id="5295945at2"/>
<dbReference type="UniPathway" id="UPA00253">
    <property type="reaction ID" value="UER00332"/>
</dbReference>
<dbReference type="Proteomes" id="UP000000754">
    <property type="component" value="Chromosome"/>
</dbReference>
<dbReference type="GO" id="GO:0005524">
    <property type="term" value="F:ATP binding"/>
    <property type="evidence" value="ECO:0007669"/>
    <property type="project" value="UniProtKB-KW"/>
</dbReference>
<dbReference type="GO" id="GO:0004515">
    <property type="term" value="F:nicotinate-nucleotide adenylyltransferase activity"/>
    <property type="evidence" value="ECO:0007669"/>
    <property type="project" value="UniProtKB-UniRule"/>
</dbReference>
<dbReference type="GO" id="GO:0009435">
    <property type="term" value="P:NAD biosynthetic process"/>
    <property type="evidence" value="ECO:0007669"/>
    <property type="project" value="UniProtKB-UniRule"/>
</dbReference>
<dbReference type="CDD" id="cd02165">
    <property type="entry name" value="NMNAT"/>
    <property type="match status" value="1"/>
</dbReference>
<dbReference type="FunFam" id="3.40.50.620:FF:000039">
    <property type="entry name" value="Probable nicotinate-nucleotide adenylyltransferase"/>
    <property type="match status" value="1"/>
</dbReference>
<dbReference type="Gene3D" id="3.40.50.620">
    <property type="entry name" value="HUPs"/>
    <property type="match status" value="1"/>
</dbReference>
<dbReference type="HAMAP" id="MF_00244">
    <property type="entry name" value="NaMN_adenylyltr"/>
    <property type="match status" value="1"/>
</dbReference>
<dbReference type="InterPro" id="IPR004821">
    <property type="entry name" value="Cyt_trans-like"/>
</dbReference>
<dbReference type="InterPro" id="IPR005248">
    <property type="entry name" value="NadD/NMNAT"/>
</dbReference>
<dbReference type="InterPro" id="IPR014729">
    <property type="entry name" value="Rossmann-like_a/b/a_fold"/>
</dbReference>
<dbReference type="NCBIfam" id="TIGR00125">
    <property type="entry name" value="cyt_tran_rel"/>
    <property type="match status" value="1"/>
</dbReference>
<dbReference type="NCBIfam" id="TIGR00482">
    <property type="entry name" value="nicotinate (nicotinamide) nucleotide adenylyltransferase"/>
    <property type="match status" value="1"/>
</dbReference>
<dbReference type="NCBIfam" id="NF000840">
    <property type="entry name" value="PRK00071.1-3"/>
    <property type="match status" value="1"/>
</dbReference>
<dbReference type="PANTHER" id="PTHR39321">
    <property type="entry name" value="NICOTINATE-NUCLEOTIDE ADENYLYLTRANSFERASE-RELATED"/>
    <property type="match status" value="1"/>
</dbReference>
<dbReference type="PANTHER" id="PTHR39321:SF3">
    <property type="entry name" value="PHOSPHOPANTETHEINE ADENYLYLTRANSFERASE"/>
    <property type="match status" value="1"/>
</dbReference>
<dbReference type="Pfam" id="PF01467">
    <property type="entry name" value="CTP_transf_like"/>
    <property type="match status" value="1"/>
</dbReference>
<dbReference type="SUPFAM" id="SSF52374">
    <property type="entry name" value="Nucleotidylyl transferase"/>
    <property type="match status" value="1"/>
</dbReference>
<comment type="function">
    <text evidence="1">Catalyzes the reversible adenylation of nicotinate mononucleotide (NaMN) to nicotinic acid adenine dinucleotide (NaAD).</text>
</comment>
<comment type="catalytic activity">
    <reaction evidence="1">
        <text>nicotinate beta-D-ribonucleotide + ATP + H(+) = deamido-NAD(+) + diphosphate</text>
        <dbReference type="Rhea" id="RHEA:22860"/>
        <dbReference type="ChEBI" id="CHEBI:15378"/>
        <dbReference type="ChEBI" id="CHEBI:30616"/>
        <dbReference type="ChEBI" id="CHEBI:33019"/>
        <dbReference type="ChEBI" id="CHEBI:57502"/>
        <dbReference type="ChEBI" id="CHEBI:58437"/>
        <dbReference type="EC" id="2.7.7.18"/>
    </reaction>
</comment>
<comment type="pathway">
    <text evidence="1">Cofactor biosynthesis; NAD(+) biosynthesis; deamido-NAD(+) from nicotinate D-ribonucleotide: step 1/1.</text>
</comment>
<comment type="similarity">
    <text evidence="1">Belongs to the NadD family.</text>
</comment>
<protein>
    <recommendedName>
        <fullName evidence="1">Probable nicotinate-nucleotide adenylyltransferase</fullName>
        <ecNumber evidence="1">2.7.7.18</ecNumber>
    </recommendedName>
    <alternativeName>
        <fullName evidence="1">Deamido-NAD(+) diphosphorylase</fullName>
    </alternativeName>
    <alternativeName>
        <fullName evidence="1">Deamido-NAD(+) pyrophosphorylase</fullName>
    </alternativeName>
    <alternativeName>
        <fullName evidence="1">Nicotinate mononucleotide adenylyltransferase</fullName>
        <shortName evidence="1">NaMN adenylyltransferase</shortName>
    </alternativeName>
</protein>
<gene>
    <name evidence="1" type="primary">nadD</name>
    <name type="ordered locus">Arth_2385</name>
</gene>
<reference key="1">
    <citation type="journal article" date="2013" name="Stand. Genomic Sci.">
        <title>Complete genome sequence of Arthrobacter sp. strain FB24.</title>
        <authorList>
            <person name="Nakatsu C.H."/>
            <person name="Barabote R."/>
            <person name="Thompson S."/>
            <person name="Bruce D."/>
            <person name="Detter C."/>
            <person name="Brettin T."/>
            <person name="Han C."/>
            <person name="Beasley F."/>
            <person name="Chen W."/>
            <person name="Konopka A."/>
            <person name="Xie G."/>
        </authorList>
    </citation>
    <scope>NUCLEOTIDE SEQUENCE [LARGE SCALE GENOMIC DNA]</scope>
    <source>
        <strain>FB24</strain>
    </source>
</reference>
<proteinExistence type="inferred from homology"/>
<sequence length="205" mass="22368">MGGTFDPIHHGHLVAASEVAAKFGLDEVVFVPTGQPWQKMSKKVSEPEHRYLMTVIATASNPRFTVSRVDVDRPGPTYTIDTLRDLRTQRPDADLFFITGADAMAQILSWKNIDELWSLAHFVGVTRPGHVLDGMGRKDVSLLEVPAMAISSTDCRTRVAAGNPVWYLVPDGVVQYIAKYGLYAGHADPGPSAALTELHEPASTE</sequence>
<evidence type="ECO:0000255" key="1">
    <source>
        <dbReference type="HAMAP-Rule" id="MF_00244"/>
    </source>
</evidence>